<sequence>MWKEKVRDNILGEVIDWKALIDSLKKERFTGYIKVESWDETDYVILAEGSVKKIVRHKDNKKTFLDTSNYTPSSESKISVYKSSPLTTAHICKDLNFFEYQTLSLSGYGEEIFHSELNLVNPEKLETFFQKVNLNGYAVIYTYTSIYCNVFLLQGHLVGINGGNTWDSEVPSQKDLWQGKVFLSAYFIEPDEVLLLISLKRGFKEKNELNGNGFFVNGNYVGFVENGNIKKGLLILPEEIVETQEVKGEKFLEVNLIENPERLEISFKDLIPKEEKKIKPDVPLKVREIFLDYIGPVGKILWDKVLQELDISPEEFTHPTFRMFINRLAQEIPEEDLSKEFLNKAWEVLDESTST</sequence>
<gene>
    <name type="ordered locus">aq_1824</name>
</gene>
<reference key="1">
    <citation type="journal article" date="1998" name="Nature">
        <title>The complete genome of the hyperthermophilic bacterium Aquifex aeolicus.</title>
        <authorList>
            <person name="Deckert G."/>
            <person name="Warren P.V."/>
            <person name="Gaasterland T."/>
            <person name="Young W.G."/>
            <person name="Lenox A.L."/>
            <person name="Graham D.E."/>
            <person name="Overbeek R."/>
            <person name="Snead M.A."/>
            <person name="Keller M."/>
            <person name="Aujay M."/>
            <person name="Huber R."/>
            <person name="Feldman R.A."/>
            <person name="Short J.M."/>
            <person name="Olsen G.J."/>
            <person name="Swanson R.V."/>
        </authorList>
    </citation>
    <scope>NUCLEOTIDE SEQUENCE [LARGE SCALE GENOMIC DNA]</scope>
    <source>
        <strain>VF5</strain>
    </source>
</reference>
<organism>
    <name type="scientific">Aquifex aeolicus (strain VF5)</name>
    <dbReference type="NCBI Taxonomy" id="224324"/>
    <lineage>
        <taxon>Bacteria</taxon>
        <taxon>Pseudomonadati</taxon>
        <taxon>Aquificota</taxon>
        <taxon>Aquificia</taxon>
        <taxon>Aquificales</taxon>
        <taxon>Aquificaceae</taxon>
        <taxon>Aquifex</taxon>
    </lineage>
</organism>
<feature type="chain" id="PRO_0000186948" description="Uncharacterized protein aq_1824">
    <location>
        <begin position="1"/>
        <end position="355"/>
    </location>
</feature>
<accession>O67685</accession>
<dbReference type="EMBL" id="AE000657">
    <property type="protein sequence ID" value="AAC07657.1"/>
    <property type="molecule type" value="Genomic_DNA"/>
</dbReference>
<dbReference type="PIR" id="C70457">
    <property type="entry name" value="C70457"/>
</dbReference>
<dbReference type="RefSeq" id="NP_214251.1">
    <property type="nucleotide sequence ID" value="NC_000918.1"/>
</dbReference>
<dbReference type="RefSeq" id="WP_010881188.1">
    <property type="nucleotide sequence ID" value="NC_000918.1"/>
</dbReference>
<dbReference type="STRING" id="224324.aq_1824"/>
<dbReference type="EnsemblBacteria" id="AAC07657">
    <property type="protein sequence ID" value="AAC07657"/>
    <property type="gene ID" value="aq_1824"/>
</dbReference>
<dbReference type="KEGG" id="aae:aq_1824"/>
<dbReference type="PATRIC" id="fig|224324.8.peg.1408"/>
<dbReference type="HOGENOM" id="CLU_779981_0_0_0"/>
<dbReference type="InParanoid" id="O67685"/>
<dbReference type="OrthoDB" id="10662at2"/>
<dbReference type="Proteomes" id="UP000000798">
    <property type="component" value="Chromosome"/>
</dbReference>
<keyword id="KW-1185">Reference proteome</keyword>
<name>Y1824_AQUAE</name>
<protein>
    <recommendedName>
        <fullName>Uncharacterized protein aq_1824</fullName>
    </recommendedName>
</protein>
<proteinExistence type="predicted"/>